<dbReference type="EMBL" id="AF004946">
    <property type="protein sequence ID" value="AAB60896.1"/>
    <property type="molecule type" value="mRNA"/>
</dbReference>
<dbReference type="SMR" id="Q41258"/>
<dbReference type="GO" id="GO:0008289">
    <property type="term" value="F:lipid binding"/>
    <property type="evidence" value="ECO:0007669"/>
    <property type="project" value="InterPro"/>
</dbReference>
<dbReference type="GO" id="GO:0042742">
    <property type="term" value="P:defense response to bacterium"/>
    <property type="evidence" value="ECO:0007669"/>
    <property type="project" value="UniProtKB-KW"/>
</dbReference>
<dbReference type="GO" id="GO:0050832">
    <property type="term" value="P:defense response to fungus"/>
    <property type="evidence" value="ECO:0007669"/>
    <property type="project" value="UniProtKB-KW"/>
</dbReference>
<dbReference type="GO" id="GO:0031640">
    <property type="term" value="P:killing of cells of another organism"/>
    <property type="evidence" value="ECO:0007669"/>
    <property type="project" value="UniProtKB-KW"/>
</dbReference>
<dbReference type="GO" id="GO:0006869">
    <property type="term" value="P:lipid transport"/>
    <property type="evidence" value="ECO:0007669"/>
    <property type="project" value="InterPro"/>
</dbReference>
<dbReference type="CDD" id="cd01960">
    <property type="entry name" value="nsLTP1"/>
    <property type="match status" value="1"/>
</dbReference>
<dbReference type="Gene3D" id="1.10.110.10">
    <property type="entry name" value="Plant lipid-transfer and hydrophobic proteins"/>
    <property type="match status" value="1"/>
</dbReference>
<dbReference type="InterPro" id="IPR036312">
    <property type="entry name" value="Bifun_inhib/LTP/seed_sf"/>
</dbReference>
<dbReference type="InterPro" id="IPR016140">
    <property type="entry name" value="Bifunc_inhib/LTP/seed_store"/>
</dbReference>
<dbReference type="InterPro" id="IPR000528">
    <property type="entry name" value="Plant_nsLTP"/>
</dbReference>
<dbReference type="PANTHER" id="PTHR33076">
    <property type="entry name" value="NON-SPECIFIC LIPID-TRANSFER PROTEIN 2-RELATED"/>
    <property type="match status" value="1"/>
</dbReference>
<dbReference type="Pfam" id="PF00234">
    <property type="entry name" value="Tryp_alpha_amyl"/>
    <property type="match status" value="1"/>
</dbReference>
<dbReference type="SMART" id="SM00499">
    <property type="entry name" value="AAI"/>
    <property type="match status" value="1"/>
</dbReference>
<dbReference type="SUPFAM" id="SSF47699">
    <property type="entry name" value="Bifunctional inhibitor/lipid-transfer protein/seed storage 2S albumin"/>
    <property type="match status" value="1"/>
</dbReference>
<organism>
    <name type="scientific">Allium cepa</name>
    <name type="common">Onion</name>
    <dbReference type="NCBI Taxonomy" id="4679"/>
    <lineage>
        <taxon>Eukaryota</taxon>
        <taxon>Viridiplantae</taxon>
        <taxon>Streptophyta</taxon>
        <taxon>Embryophyta</taxon>
        <taxon>Tracheophyta</taxon>
        <taxon>Spermatophyta</taxon>
        <taxon>Magnoliopsida</taxon>
        <taxon>Liliopsida</taxon>
        <taxon>Asparagales</taxon>
        <taxon>Amaryllidaceae</taxon>
        <taxon>Allioideae</taxon>
        <taxon>Allieae</taxon>
        <taxon>Allium</taxon>
    </lineage>
</organism>
<comment type="function">
    <text>Antifungal and antibacterial activity against the Gram-positive bacteria B.megaterium and S.lutea.</text>
</comment>
<comment type="subunit">
    <text>Monomer.</text>
</comment>
<comment type="similarity">
    <text evidence="3">Belongs to the plant LTP family. Highly divergent.</text>
</comment>
<name>AMP1_ALLCE</name>
<accession>Q41258</accession>
<evidence type="ECO:0000255" key="1"/>
<evidence type="ECO:0000269" key="2">
    <source>
    </source>
</evidence>
<evidence type="ECO:0000305" key="3"/>
<reference key="1">
    <citation type="journal article" date="1995" name="Plant Physiol.">
        <title>A potent antimicrobial protein from onion seeds showing sequence homology to plant lipid transfer proteins.</title>
        <authorList>
            <person name="Cammue B.P.A."/>
            <person name="Thevissen K."/>
            <person name="Hendriks M."/>
            <person name="Eggermont K."/>
            <person name="Goderis I.J."/>
            <person name="Proost P."/>
            <person name="van Damme J."/>
            <person name="Osborn R.W."/>
            <person name="Guerbette F."/>
            <person name="Kader J.-C."/>
            <person name="Broekaert W.F."/>
        </authorList>
    </citation>
    <scope>NUCLEOTIDE SEQUENCE [MRNA]</scope>
    <scope>PROTEIN SEQUENCE OF 37-120</scope>
    <scope>DISULFIDE BONDS</scope>
    <source>
        <tissue>Seed</tissue>
    </source>
</reference>
<reference key="2">
    <citation type="journal article" date="1998" name="Biochemistry">
        <title>Solution structure of Ace-AMP1, a potent antimicrobial protein extracted from onion seeds. Structural analogies with plant nonspecific lipid transfer proteins.</title>
        <authorList>
            <person name="Tassin S."/>
            <person name="Broekaert W.F."/>
            <person name="Marion D."/>
            <person name="Acland D.P."/>
            <person name="Ptak M."/>
            <person name="Vovelle F."/>
            <person name="Sodano P."/>
        </authorList>
    </citation>
    <scope>STRUCTURE BY NMR</scope>
</reference>
<keyword id="KW-0044">Antibiotic</keyword>
<keyword id="KW-0929">Antimicrobial</keyword>
<keyword id="KW-0903">Direct protein sequencing</keyword>
<keyword id="KW-1015">Disulfide bond</keyword>
<keyword id="KW-0295">Fungicide</keyword>
<keyword id="KW-0611">Plant defense</keyword>
<keyword id="KW-0732">Signal</keyword>
<feature type="signal peptide" evidence="1">
    <location>
        <begin position="1"/>
        <end position="27"/>
    </location>
</feature>
<feature type="chain" id="PRO_0000018416" description="Antimicrobial protein Ace-AMP1">
    <location>
        <begin position="28"/>
        <end position="132"/>
    </location>
</feature>
<feature type="disulfide bond" evidence="2">
    <location>
        <begin position="31"/>
        <end position="76"/>
    </location>
</feature>
<feature type="disulfide bond" evidence="2">
    <location>
        <begin position="41"/>
        <end position="54"/>
    </location>
</feature>
<feature type="disulfide bond" evidence="2">
    <location>
        <begin position="55"/>
        <end position="100"/>
    </location>
</feature>
<feature type="disulfide bond" evidence="2">
    <location>
        <begin position="74"/>
        <end position="116"/>
    </location>
</feature>
<protein>
    <recommendedName>
        <fullName>Antimicrobial protein Ace-AMP1</fullName>
    </recommendedName>
</protein>
<proteinExistence type="evidence at protein level"/>
<sequence>MVRVVSLLAASTFILLIMIISSPYANSQNICPRVNRIVTPCVAYGLGRAPIAPCCRALNDLRFVNTRNLRRAACRCLVGVVNRNPGLRRNPRFQNIPRDCRNTFVRPFWWRPRIQCGRINLTDKLIYLDAEE</sequence>